<name>PO3F2_MOUSE</name>
<organism>
    <name type="scientific">Mus musculus</name>
    <name type="common">Mouse</name>
    <dbReference type="NCBI Taxonomy" id="10090"/>
    <lineage>
        <taxon>Eukaryota</taxon>
        <taxon>Metazoa</taxon>
        <taxon>Chordata</taxon>
        <taxon>Craniata</taxon>
        <taxon>Vertebrata</taxon>
        <taxon>Euteleostomi</taxon>
        <taxon>Mammalia</taxon>
        <taxon>Eutheria</taxon>
        <taxon>Euarchontoglires</taxon>
        <taxon>Glires</taxon>
        <taxon>Rodentia</taxon>
        <taxon>Myomorpha</taxon>
        <taxon>Muroidea</taxon>
        <taxon>Muridae</taxon>
        <taxon>Murinae</taxon>
        <taxon>Mus</taxon>
        <taxon>Mus</taxon>
    </lineage>
</organism>
<sequence>MATAASNHYSLLTSSASIVHAEPPGGMQQGAGGYREAQSLVQGDYGALQSNGHPLSHAHQWITALSHGGGGGGGGGGGGGGGGGGGGGDGSPWSTSPLGQPDIKPSVVVQQGGRGDELHGPGALQQQHQQQQQQQQQQQQQQQQQQQQQQQRPPHLVHHAANHHPGPGAWRSAAAAAHLPPSMGASNGGLLYSQPSFTVNGMLGAGGQPAGLHHHGLRDAHDEPHHADHHPHPHSHPHQQPPPPPPPQGPPGHPGAHHDPHSDEDTPTSDDLEQFAKQFKQRRIKLGFTQADVGLALGTLYGNVFSQTTICRFEALQLSFKNMCKLKPLLNKWLEEADSSSGSPTSIDKIAAQGRKRKKRTSIEVSVKGALESHFLKCPKPSAQEITSLADSLQLEKEVVRVWFCNRRQKEKRMTPPGGTLPGAEDVYGGSRDTPPHHGVQTPVQ</sequence>
<protein>
    <recommendedName>
        <fullName>POU domain, class 3, transcription factor 2</fullName>
    </recommendedName>
    <alternativeName>
        <fullName>Brain-specific homeobox/POU domain protein 2</fullName>
        <shortName>Brain-2</shortName>
        <shortName>Brn-2</shortName>
    </alternativeName>
    <alternativeName>
        <fullName>Nervous system-specific octamer-binding transcription factor N-Oct-3</fullName>
    </alternativeName>
    <alternativeName>
        <fullName>Octamer-binding protein 7</fullName>
        <shortName>Oct-7</shortName>
    </alternativeName>
    <alternativeName>
        <fullName>Octamer-binding transcription factor 7</fullName>
        <shortName>OTF-7</shortName>
    </alternativeName>
</protein>
<keyword id="KW-0010">Activator</keyword>
<keyword id="KW-0221">Differentiation</keyword>
<keyword id="KW-0238">DNA-binding</keyword>
<keyword id="KW-0371">Homeobox</keyword>
<keyword id="KW-0524">Neurogenesis</keyword>
<keyword id="KW-0539">Nucleus</keyword>
<keyword id="KW-0597">Phosphoprotein</keyword>
<keyword id="KW-1185">Reference proteome</keyword>
<keyword id="KW-0804">Transcription</keyword>
<keyword id="KW-0805">Transcription regulation</keyword>
<dbReference type="EMBL" id="M88300">
    <property type="protein sequence ID" value="AAA39961.1"/>
    <property type="molecule type" value="Genomic_DNA"/>
</dbReference>
<dbReference type="EMBL" id="AL772230">
    <property type="status" value="NOT_ANNOTATED_CDS"/>
    <property type="molecule type" value="Genomic_DNA"/>
</dbReference>
<dbReference type="CCDS" id="CCDS18005.1"/>
<dbReference type="PIR" id="S31224">
    <property type="entry name" value="S31224"/>
</dbReference>
<dbReference type="RefSeq" id="NP_032925.1">
    <property type="nucleotide sequence ID" value="NM_008899.2"/>
</dbReference>
<dbReference type="SMR" id="P31360"/>
<dbReference type="BioGRID" id="202306">
    <property type="interactions" value="1"/>
</dbReference>
<dbReference type="FunCoup" id="P31360">
    <property type="interactions" value="893"/>
</dbReference>
<dbReference type="STRING" id="10090.ENSMUSP00000136147"/>
<dbReference type="iPTMnet" id="P31360"/>
<dbReference type="PhosphoSitePlus" id="P31360"/>
<dbReference type="PaxDb" id="10090-ENSMUSP00000136147"/>
<dbReference type="PeptideAtlas" id="P31360"/>
<dbReference type="ProteomicsDB" id="289649"/>
<dbReference type="Antibodypedia" id="18892">
    <property type="antibodies" value="361 antibodies from 41 providers"/>
</dbReference>
<dbReference type="DNASU" id="18992"/>
<dbReference type="Ensembl" id="ENSMUST00000178174.3">
    <property type="protein sequence ID" value="ENSMUSP00000136147.2"/>
    <property type="gene ID" value="ENSMUSG00000095139.3"/>
</dbReference>
<dbReference type="GeneID" id="18992"/>
<dbReference type="KEGG" id="mmu:18992"/>
<dbReference type="UCSC" id="uc008sdp.2">
    <property type="organism name" value="mouse"/>
</dbReference>
<dbReference type="AGR" id="MGI:101895"/>
<dbReference type="CTD" id="5454"/>
<dbReference type="MGI" id="MGI:101895">
    <property type="gene designation" value="Pou3f2"/>
</dbReference>
<dbReference type="VEuPathDB" id="HostDB:ENSMUSG00000095139"/>
<dbReference type="eggNOG" id="KOG3802">
    <property type="taxonomic scope" value="Eukaryota"/>
</dbReference>
<dbReference type="GeneTree" id="ENSGT00940000162208"/>
<dbReference type="HOGENOM" id="CLU_013065_1_2_1"/>
<dbReference type="InParanoid" id="P31360"/>
<dbReference type="OMA" id="HQWITAP"/>
<dbReference type="OrthoDB" id="6358449at2759"/>
<dbReference type="PhylomeDB" id="P31360"/>
<dbReference type="TreeFam" id="TF316413"/>
<dbReference type="BioGRID-ORCS" id="18992">
    <property type="hits" value="0 hits in 80 CRISPR screens"/>
</dbReference>
<dbReference type="ChiTaRS" id="Pou3f2">
    <property type="organism name" value="mouse"/>
</dbReference>
<dbReference type="PRO" id="PR:P31360"/>
<dbReference type="Proteomes" id="UP000000589">
    <property type="component" value="Chromosome 4"/>
</dbReference>
<dbReference type="RNAct" id="P31360">
    <property type="molecule type" value="protein"/>
</dbReference>
<dbReference type="Bgee" id="ENSMUSG00000095139">
    <property type="expression patterns" value="Expressed in ventricular zone and 103 other cell types or tissues"/>
</dbReference>
<dbReference type="GO" id="GO:0005654">
    <property type="term" value="C:nucleoplasm"/>
    <property type="evidence" value="ECO:0007669"/>
    <property type="project" value="Ensembl"/>
</dbReference>
<dbReference type="GO" id="GO:0005634">
    <property type="term" value="C:nucleus"/>
    <property type="evidence" value="ECO:0000314"/>
    <property type="project" value="MGI"/>
</dbReference>
<dbReference type="GO" id="GO:0005667">
    <property type="term" value="C:transcription regulator complex"/>
    <property type="evidence" value="ECO:0000314"/>
    <property type="project" value="MGI"/>
</dbReference>
<dbReference type="GO" id="GO:0003677">
    <property type="term" value="F:DNA binding"/>
    <property type="evidence" value="ECO:0000314"/>
    <property type="project" value="UniProtKB"/>
</dbReference>
<dbReference type="GO" id="GO:0001228">
    <property type="term" value="F:DNA-binding transcription activator activity, RNA polymerase II-specific"/>
    <property type="evidence" value="ECO:0000314"/>
    <property type="project" value="NTNU_SB"/>
</dbReference>
<dbReference type="GO" id="GO:0003700">
    <property type="term" value="F:DNA-binding transcription factor activity"/>
    <property type="evidence" value="ECO:0000314"/>
    <property type="project" value="UniProtKB"/>
</dbReference>
<dbReference type="GO" id="GO:0042802">
    <property type="term" value="F:identical protein binding"/>
    <property type="evidence" value="ECO:0007669"/>
    <property type="project" value="Ensembl"/>
</dbReference>
<dbReference type="GO" id="GO:0000978">
    <property type="term" value="F:RNA polymerase II cis-regulatory region sequence-specific DNA binding"/>
    <property type="evidence" value="ECO:0000314"/>
    <property type="project" value="NTNU_SB"/>
</dbReference>
<dbReference type="GO" id="GO:0043565">
    <property type="term" value="F:sequence-specific DNA binding"/>
    <property type="evidence" value="ECO:0000314"/>
    <property type="project" value="MGI"/>
</dbReference>
<dbReference type="GO" id="GO:0021953">
    <property type="term" value="P:central nervous system neuron differentiation"/>
    <property type="evidence" value="ECO:0000314"/>
    <property type="project" value="MGI"/>
</dbReference>
<dbReference type="GO" id="GO:0021799">
    <property type="term" value="P:cerebral cortex radially oriented cell migration"/>
    <property type="evidence" value="ECO:0000316"/>
    <property type="project" value="MGI"/>
</dbReference>
<dbReference type="GO" id="GO:0008544">
    <property type="term" value="P:epidermis development"/>
    <property type="evidence" value="ECO:0000315"/>
    <property type="project" value="MGI"/>
</dbReference>
<dbReference type="GO" id="GO:0021897">
    <property type="term" value="P:forebrain astrocyte development"/>
    <property type="evidence" value="ECO:0000315"/>
    <property type="project" value="MGI"/>
</dbReference>
<dbReference type="GO" id="GO:0021869">
    <property type="term" value="P:forebrain ventricular zone progenitor cell division"/>
    <property type="evidence" value="ECO:0000316"/>
    <property type="project" value="MGI"/>
</dbReference>
<dbReference type="GO" id="GO:0021979">
    <property type="term" value="P:hypothalamus cell differentiation"/>
    <property type="evidence" value="ECO:0000315"/>
    <property type="project" value="MGI"/>
</dbReference>
<dbReference type="GO" id="GO:0022011">
    <property type="term" value="P:myelination in peripheral nervous system"/>
    <property type="evidence" value="ECO:0000316"/>
    <property type="project" value="MGI"/>
</dbReference>
<dbReference type="GO" id="GO:0010629">
    <property type="term" value="P:negative regulation of gene expression"/>
    <property type="evidence" value="ECO:0000315"/>
    <property type="project" value="CACAO"/>
</dbReference>
<dbReference type="GO" id="GO:0007399">
    <property type="term" value="P:nervous system development"/>
    <property type="evidence" value="ECO:0000314"/>
    <property type="project" value="UniProtKB"/>
</dbReference>
<dbReference type="GO" id="GO:0061101">
    <property type="term" value="P:neuroendocrine cell differentiation"/>
    <property type="evidence" value="ECO:0000315"/>
    <property type="project" value="MGI"/>
</dbReference>
<dbReference type="GO" id="GO:0021985">
    <property type="term" value="P:neurohypophysis development"/>
    <property type="evidence" value="ECO:0000315"/>
    <property type="project" value="MGI"/>
</dbReference>
<dbReference type="GO" id="GO:0048666">
    <property type="term" value="P:neuron development"/>
    <property type="evidence" value="ECO:0000314"/>
    <property type="project" value="UniProtKB"/>
</dbReference>
<dbReference type="GO" id="GO:0030182">
    <property type="term" value="P:neuron differentiation"/>
    <property type="evidence" value="ECO:0000314"/>
    <property type="project" value="UniProtKB"/>
</dbReference>
<dbReference type="GO" id="GO:0048663">
    <property type="term" value="P:neuron fate commitment"/>
    <property type="evidence" value="ECO:0000314"/>
    <property type="project" value="UniProtKB"/>
</dbReference>
<dbReference type="GO" id="GO:0048665">
    <property type="term" value="P:neuron fate specification"/>
    <property type="evidence" value="ECO:0000314"/>
    <property type="project" value="UniProtKB"/>
</dbReference>
<dbReference type="GO" id="GO:0008284">
    <property type="term" value="P:positive regulation of cell population proliferation"/>
    <property type="evidence" value="ECO:0000266"/>
    <property type="project" value="MGI"/>
</dbReference>
<dbReference type="GO" id="GO:0040018">
    <property type="term" value="P:positive regulation of multicellular organism growth"/>
    <property type="evidence" value="ECO:0000315"/>
    <property type="project" value="MGI"/>
</dbReference>
<dbReference type="GO" id="GO:0045944">
    <property type="term" value="P:positive regulation of transcription by RNA polymerase II"/>
    <property type="evidence" value="ECO:0000314"/>
    <property type="project" value="UniProtKB"/>
</dbReference>
<dbReference type="GO" id="GO:0050770">
    <property type="term" value="P:regulation of axonogenesis"/>
    <property type="evidence" value="ECO:0000315"/>
    <property type="project" value="MGI"/>
</dbReference>
<dbReference type="GO" id="GO:0045595">
    <property type="term" value="P:regulation of cell differentiation"/>
    <property type="evidence" value="ECO:0000315"/>
    <property type="project" value="MGI"/>
</dbReference>
<dbReference type="GO" id="GO:0006357">
    <property type="term" value="P:regulation of transcription by RNA polymerase II"/>
    <property type="evidence" value="ECO:0000314"/>
    <property type="project" value="UniProtKB"/>
</dbReference>
<dbReference type="GO" id="GO:0014044">
    <property type="term" value="P:Schwann cell development"/>
    <property type="evidence" value="ECO:0000316"/>
    <property type="project" value="MGI"/>
</dbReference>
<dbReference type="CDD" id="cd00086">
    <property type="entry name" value="homeodomain"/>
    <property type="match status" value="1"/>
</dbReference>
<dbReference type="FunFam" id="1.10.10.60:FF:000005">
    <property type="entry name" value="POU domain protein"/>
    <property type="match status" value="1"/>
</dbReference>
<dbReference type="FunFam" id="1.10.260.40:FF:000001">
    <property type="entry name" value="POU domain protein"/>
    <property type="match status" value="1"/>
</dbReference>
<dbReference type="Gene3D" id="1.10.10.60">
    <property type="entry name" value="Homeodomain-like"/>
    <property type="match status" value="1"/>
</dbReference>
<dbReference type="Gene3D" id="1.10.260.40">
    <property type="entry name" value="lambda repressor-like DNA-binding domains"/>
    <property type="match status" value="1"/>
</dbReference>
<dbReference type="InterPro" id="IPR001356">
    <property type="entry name" value="HD"/>
</dbReference>
<dbReference type="InterPro" id="IPR017970">
    <property type="entry name" value="Homeobox_CS"/>
</dbReference>
<dbReference type="InterPro" id="IPR009057">
    <property type="entry name" value="Homeodomain-like_sf"/>
</dbReference>
<dbReference type="InterPro" id="IPR010982">
    <property type="entry name" value="Lambda_DNA-bd_dom_sf"/>
</dbReference>
<dbReference type="InterPro" id="IPR013847">
    <property type="entry name" value="POU"/>
</dbReference>
<dbReference type="InterPro" id="IPR000327">
    <property type="entry name" value="POU_dom"/>
</dbReference>
<dbReference type="InterPro" id="IPR050255">
    <property type="entry name" value="POU_domain_TF"/>
</dbReference>
<dbReference type="InterPro" id="IPR016362">
    <property type="entry name" value="TF_POU_3"/>
</dbReference>
<dbReference type="PANTHER" id="PTHR11636">
    <property type="entry name" value="POU DOMAIN"/>
    <property type="match status" value="1"/>
</dbReference>
<dbReference type="PANTHER" id="PTHR11636:SF115">
    <property type="entry name" value="POU DOMAIN, CLASS 3, TRANSCRIPTION FACTOR 2"/>
    <property type="match status" value="1"/>
</dbReference>
<dbReference type="Pfam" id="PF00046">
    <property type="entry name" value="Homeodomain"/>
    <property type="match status" value="1"/>
</dbReference>
<dbReference type="Pfam" id="PF00157">
    <property type="entry name" value="Pou"/>
    <property type="match status" value="1"/>
</dbReference>
<dbReference type="PIRSF" id="PIRSF002629">
    <property type="entry name" value="Transcription_factor_POU"/>
    <property type="match status" value="1"/>
</dbReference>
<dbReference type="PRINTS" id="PR00028">
    <property type="entry name" value="POUDOMAIN"/>
</dbReference>
<dbReference type="SMART" id="SM00389">
    <property type="entry name" value="HOX"/>
    <property type="match status" value="1"/>
</dbReference>
<dbReference type="SMART" id="SM00352">
    <property type="entry name" value="POU"/>
    <property type="match status" value="1"/>
</dbReference>
<dbReference type="SUPFAM" id="SSF46689">
    <property type="entry name" value="Homeodomain-like"/>
    <property type="match status" value="1"/>
</dbReference>
<dbReference type="SUPFAM" id="SSF47413">
    <property type="entry name" value="lambda repressor-like DNA-binding domains"/>
    <property type="match status" value="1"/>
</dbReference>
<dbReference type="PROSITE" id="PS00027">
    <property type="entry name" value="HOMEOBOX_1"/>
    <property type="match status" value="1"/>
</dbReference>
<dbReference type="PROSITE" id="PS50071">
    <property type="entry name" value="HOMEOBOX_2"/>
    <property type="match status" value="1"/>
</dbReference>
<dbReference type="PROSITE" id="PS00035">
    <property type="entry name" value="POU_1"/>
    <property type="match status" value="1"/>
</dbReference>
<dbReference type="PROSITE" id="PS00465">
    <property type="entry name" value="POU_2"/>
    <property type="match status" value="1"/>
</dbReference>
<dbReference type="PROSITE" id="PS51179">
    <property type="entry name" value="POU_3"/>
    <property type="match status" value="1"/>
</dbReference>
<feature type="chain" id="PRO_0000100723" description="POU domain, class 3, transcription factor 2">
    <location>
        <begin position="1"/>
        <end position="445"/>
    </location>
</feature>
<feature type="domain" description="POU-specific" evidence="4">
    <location>
        <begin position="264"/>
        <end position="338"/>
    </location>
</feature>
<feature type="DNA-binding region" description="Homeobox" evidence="3">
    <location>
        <begin position="356"/>
        <end position="415"/>
    </location>
</feature>
<feature type="region of interest" description="Disordered" evidence="5">
    <location>
        <begin position="64"/>
        <end position="173"/>
    </location>
</feature>
<feature type="region of interest" description="Disordered" evidence="5">
    <location>
        <begin position="203"/>
        <end position="269"/>
    </location>
</feature>
<feature type="region of interest" description="Disordered" evidence="5">
    <location>
        <begin position="411"/>
        <end position="445"/>
    </location>
</feature>
<feature type="compositionally biased region" description="Gly residues" evidence="5">
    <location>
        <begin position="67"/>
        <end position="90"/>
    </location>
</feature>
<feature type="compositionally biased region" description="Low complexity" evidence="5">
    <location>
        <begin position="125"/>
        <end position="151"/>
    </location>
</feature>
<feature type="compositionally biased region" description="Low complexity" evidence="5">
    <location>
        <begin position="163"/>
        <end position="173"/>
    </location>
</feature>
<feature type="compositionally biased region" description="Basic and acidic residues" evidence="5">
    <location>
        <begin position="217"/>
        <end position="226"/>
    </location>
</feature>
<feature type="compositionally biased region" description="Basic residues" evidence="5">
    <location>
        <begin position="227"/>
        <end position="237"/>
    </location>
</feature>
<feature type="compositionally biased region" description="Pro residues" evidence="5">
    <location>
        <begin position="239"/>
        <end position="253"/>
    </location>
</feature>
<feature type="modified residue" description="Phosphoserine" evidence="1">
    <location>
        <position position="343"/>
    </location>
</feature>
<reference key="1">
    <citation type="journal article" date="1992" name="Proc. Natl. Acad. Sci. U.S.A.">
        <title>Structure and evolution of four POU domain genes expressed in mouse brain.</title>
        <authorList>
            <person name="Hara Y."/>
            <person name="Rovescalli C."/>
            <person name="Kim Y."/>
            <person name="Nirenberg M."/>
        </authorList>
    </citation>
    <scope>NUCLEOTIDE SEQUENCE [GENOMIC DNA]</scope>
    <source>
        <tissue>Brain</tissue>
    </source>
</reference>
<reference key="2">
    <citation type="journal article" date="2009" name="PLoS Biol.">
        <title>Lineage-specific biology revealed by a finished genome assembly of the mouse.</title>
        <authorList>
            <person name="Church D.M."/>
            <person name="Goodstadt L."/>
            <person name="Hillier L.W."/>
            <person name="Zody M.C."/>
            <person name="Goldstein S."/>
            <person name="She X."/>
            <person name="Bult C.J."/>
            <person name="Agarwala R."/>
            <person name="Cherry J.L."/>
            <person name="DiCuccio M."/>
            <person name="Hlavina W."/>
            <person name="Kapustin Y."/>
            <person name="Meric P."/>
            <person name="Maglott D."/>
            <person name="Birtle Z."/>
            <person name="Marques A.C."/>
            <person name="Graves T."/>
            <person name="Zhou S."/>
            <person name="Teague B."/>
            <person name="Potamousis K."/>
            <person name="Churas C."/>
            <person name="Place M."/>
            <person name="Herschleb J."/>
            <person name="Runnheim R."/>
            <person name="Forrest D."/>
            <person name="Amos-Landgraf J."/>
            <person name="Schwartz D.C."/>
            <person name="Cheng Z."/>
            <person name="Lindblad-Toh K."/>
            <person name="Eichler E.E."/>
            <person name="Ponting C.P."/>
        </authorList>
    </citation>
    <scope>NUCLEOTIDE SEQUENCE [LARGE SCALE GENOMIC DNA]</scope>
    <source>
        <strain>C57BL/6J</strain>
    </source>
</reference>
<reference key="3">
    <citation type="journal article" date="2008" name="Mol. Cell. Biol.">
        <title>Sox12 deletion in the mouse reveals nonreciprocal redundancy with the related Sox4 and Sox11 transcription factors.</title>
        <authorList>
            <person name="Hoser M."/>
            <person name="Potzner M.R."/>
            <person name="Koch J.M."/>
            <person name="Boesl M.R."/>
            <person name="Wegner M."/>
            <person name="Sock E."/>
        </authorList>
    </citation>
    <scope>FUNCTION</scope>
</reference>
<reference key="4">
    <citation type="journal article" date="2008" name="Nucleic Acids Res.">
        <title>The three SoxC proteins--Sox4, Sox11 and Sox12--exhibit overlapping expression patterns and molecular properties.</title>
        <authorList>
            <person name="Dy P."/>
            <person name="Penzo-Mendez A."/>
            <person name="Wang H."/>
            <person name="Pedraza C.E."/>
            <person name="Macklin W.B."/>
            <person name="Lefebvre V."/>
        </authorList>
    </citation>
    <scope>FUNCTION</scope>
</reference>
<reference key="5">
    <citation type="journal article" date="2010" name="Nature">
        <title>Direct conversion of fibroblasts to functional neurons by defined factors.</title>
        <authorList>
            <person name="Vierbuchen T."/>
            <person name="Ostermeier A."/>
            <person name="Pang Z.P."/>
            <person name="Kokubu Y."/>
            <person name="Suedhof T.C."/>
            <person name="Wernig M."/>
        </authorList>
    </citation>
    <scope>FUNCTION</scope>
</reference>
<reference key="6">
    <citation type="journal article" date="2013" name="Cell">
        <title>Hierarchical mechanisms for direct reprogramming of fibroblasts to neurons.</title>
        <authorList>
            <person name="Wapinski O.L."/>
            <person name="Vierbuchen T."/>
            <person name="Qu K."/>
            <person name="Lee Q.Y."/>
            <person name="Chanda S."/>
            <person name="Fuentes D.R."/>
            <person name="Giresi P.G."/>
            <person name="Ng Y.H."/>
            <person name="Marro S."/>
            <person name="Neff N.F."/>
            <person name="Drechsel D."/>
            <person name="Martynoga B."/>
            <person name="Castro D.S."/>
            <person name="Webb A.E."/>
            <person name="Suedhof T.C."/>
            <person name="Brunet A."/>
            <person name="Guillemot F."/>
            <person name="Chang H.Y."/>
            <person name="Wernig M."/>
        </authorList>
    </citation>
    <scope>FUNCTION</scope>
</reference>
<reference key="7">
    <citation type="journal article" date="2014" name="PLoS ONE">
        <title>Isl1 and Pou4f2 form a complex to regulate target genes in developing retinal ganglion cells.</title>
        <authorList>
            <person name="Li R."/>
            <person name="Wu F."/>
            <person name="Ruonala R."/>
            <person name="Sapkota D."/>
            <person name="Hu Z."/>
            <person name="Mu X."/>
        </authorList>
    </citation>
    <scope>INTERACTION WITH ISL1</scope>
</reference>
<reference key="8">
    <citation type="journal article" date="2016" name="Nature">
        <title>Dissecting direct reprogramming from fibroblast to neuron using single-cell RNA-seq.</title>
        <authorList>
            <person name="Treutlein B."/>
            <person name="Lee Q.Y."/>
            <person name="Camp J.G."/>
            <person name="Mall M."/>
            <person name="Koh W."/>
            <person name="Shariati S.A."/>
            <person name="Sim S."/>
            <person name="Neff N.F."/>
            <person name="Skotheim J.M."/>
            <person name="Wernig M."/>
            <person name="Quake S.R."/>
        </authorList>
    </citation>
    <scope>FUNCTION</scope>
</reference>
<accession>P31360</accession>
<accession>A2AJY1</accession>
<comment type="function">
    <text evidence="2 6 7 8 9 11">Transcription factor that plays a key role in neuronal differentiation (PubMed:24243019). Binds preferentially to the recognition sequence which consists of two distinct half-sites, ('GCAT') and ('TAAT'), separated by a non-conserved spacer region of 0, 2, or 3 nucleotides (By similarity). Acts as a transcriptional activator when binding cooperatively with SOX4, SOX11, or SOX12 to gene promoters (PubMed:18403418, PubMed:18505825). The combination of three transcription factors, ASCL1, POU3F2/BRN2 and MYT1L, is sufficient to reprogram fibroblasts and other somatic cells into induced neuronal (iN) cells in vitro (PubMed:20107439, PubMed:24243019, PubMed:27281220). Acts downstream of ASCL1, accessing chromatin that has been opened by ASCL1, and promotes transcription of neuronal genes (PubMed:24243019).</text>
</comment>
<comment type="subunit">
    <text evidence="1 10">Interacts with PQBP1 (By similarity). Interaction with ISL1 (PubMed:24643061).</text>
</comment>
<comment type="subcellular location">
    <subcellularLocation>
        <location>Nucleus</location>
    </subcellularLocation>
</comment>
<comment type="tissue specificity">
    <text>Expressed specifically in the neuroectodermal cell lineage.</text>
</comment>
<comment type="similarity">
    <text evidence="12">Belongs to the POU transcription factor family. Class-3 subfamily.</text>
</comment>
<gene>
    <name type="primary">Pou3f2</name>
    <name type="synonym">Brn-2</name>
    <name type="synonym">Brn2</name>
    <name type="synonym">Otf7</name>
</gene>
<evidence type="ECO:0000250" key="1">
    <source>
        <dbReference type="UniProtKB" id="P20265"/>
    </source>
</evidence>
<evidence type="ECO:0000250" key="2">
    <source>
        <dbReference type="UniProtKB" id="P56222"/>
    </source>
</evidence>
<evidence type="ECO:0000255" key="3">
    <source>
        <dbReference type="PROSITE-ProRule" id="PRU00108"/>
    </source>
</evidence>
<evidence type="ECO:0000255" key="4">
    <source>
        <dbReference type="PROSITE-ProRule" id="PRU00530"/>
    </source>
</evidence>
<evidence type="ECO:0000256" key="5">
    <source>
        <dbReference type="SAM" id="MobiDB-lite"/>
    </source>
</evidence>
<evidence type="ECO:0000269" key="6">
    <source>
    </source>
</evidence>
<evidence type="ECO:0000269" key="7">
    <source>
    </source>
</evidence>
<evidence type="ECO:0000269" key="8">
    <source>
    </source>
</evidence>
<evidence type="ECO:0000269" key="9">
    <source>
    </source>
</evidence>
<evidence type="ECO:0000269" key="10">
    <source>
    </source>
</evidence>
<evidence type="ECO:0000269" key="11">
    <source>
    </source>
</evidence>
<evidence type="ECO:0000305" key="12"/>
<proteinExistence type="evidence at protein level"/>